<protein>
    <recommendedName>
        <fullName evidence="1">Large ribosomal subunit protein uL22</fullName>
    </recommendedName>
    <alternativeName>
        <fullName evidence="2">50S ribosomal protein L22</fullName>
    </alternativeName>
</protein>
<evidence type="ECO:0000255" key="1">
    <source>
        <dbReference type="HAMAP-Rule" id="MF_01331"/>
    </source>
</evidence>
<evidence type="ECO:0000305" key="2"/>
<keyword id="KW-0687">Ribonucleoprotein</keyword>
<keyword id="KW-0689">Ribosomal protein</keyword>
<keyword id="KW-0694">RNA-binding</keyword>
<keyword id="KW-0699">rRNA-binding</keyword>
<dbReference type="EMBL" id="CP001052">
    <property type="protein sequence ID" value="ACD18029.1"/>
    <property type="molecule type" value="Genomic_DNA"/>
</dbReference>
<dbReference type="SMR" id="B2T746"/>
<dbReference type="STRING" id="398527.Bphyt_3639"/>
<dbReference type="KEGG" id="bpy:Bphyt_3639"/>
<dbReference type="eggNOG" id="COG0091">
    <property type="taxonomic scope" value="Bacteria"/>
</dbReference>
<dbReference type="HOGENOM" id="CLU_083987_3_3_4"/>
<dbReference type="Proteomes" id="UP000001739">
    <property type="component" value="Chromosome 1"/>
</dbReference>
<dbReference type="GO" id="GO:0022625">
    <property type="term" value="C:cytosolic large ribosomal subunit"/>
    <property type="evidence" value="ECO:0007669"/>
    <property type="project" value="TreeGrafter"/>
</dbReference>
<dbReference type="GO" id="GO:0019843">
    <property type="term" value="F:rRNA binding"/>
    <property type="evidence" value="ECO:0007669"/>
    <property type="project" value="UniProtKB-UniRule"/>
</dbReference>
<dbReference type="GO" id="GO:0003735">
    <property type="term" value="F:structural constituent of ribosome"/>
    <property type="evidence" value="ECO:0007669"/>
    <property type="project" value="InterPro"/>
</dbReference>
<dbReference type="GO" id="GO:0006412">
    <property type="term" value="P:translation"/>
    <property type="evidence" value="ECO:0007669"/>
    <property type="project" value="UniProtKB-UniRule"/>
</dbReference>
<dbReference type="CDD" id="cd00336">
    <property type="entry name" value="Ribosomal_L22"/>
    <property type="match status" value="1"/>
</dbReference>
<dbReference type="FunFam" id="3.90.470.10:FF:000001">
    <property type="entry name" value="50S ribosomal protein L22"/>
    <property type="match status" value="1"/>
</dbReference>
<dbReference type="Gene3D" id="3.90.470.10">
    <property type="entry name" value="Ribosomal protein L22/L17"/>
    <property type="match status" value="1"/>
</dbReference>
<dbReference type="HAMAP" id="MF_01331_B">
    <property type="entry name" value="Ribosomal_uL22_B"/>
    <property type="match status" value="1"/>
</dbReference>
<dbReference type="InterPro" id="IPR001063">
    <property type="entry name" value="Ribosomal_uL22"/>
</dbReference>
<dbReference type="InterPro" id="IPR005727">
    <property type="entry name" value="Ribosomal_uL22_bac/chlpt-type"/>
</dbReference>
<dbReference type="InterPro" id="IPR047867">
    <property type="entry name" value="Ribosomal_uL22_bac/org-type"/>
</dbReference>
<dbReference type="InterPro" id="IPR018260">
    <property type="entry name" value="Ribosomal_uL22_CS"/>
</dbReference>
<dbReference type="InterPro" id="IPR036394">
    <property type="entry name" value="Ribosomal_uL22_sf"/>
</dbReference>
<dbReference type="NCBIfam" id="TIGR01044">
    <property type="entry name" value="rplV_bact"/>
    <property type="match status" value="1"/>
</dbReference>
<dbReference type="PANTHER" id="PTHR13501">
    <property type="entry name" value="CHLOROPLAST 50S RIBOSOMAL PROTEIN L22-RELATED"/>
    <property type="match status" value="1"/>
</dbReference>
<dbReference type="PANTHER" id="PTHR13501:SF8">
    <property type="entry name" value="LARGE RIBOSOMAL SUBUNIT PROTEIN UL22M"/>
    <property type="match status" value="1"/>
</dbReference>
<dbReference type="Pfam" id="PF00237">
    <property type="entry name" value="Ribosomal_L22"/>
    <property type="match status" value="1"/>
</dbReference>
<dbReference type="SUPFAM" id="SSF54843">
    <property type="entry name" value="Ribosomal protein L22"/>
    <property type="match status" value="1"/>
</dbReference>
<dbReference type="PROSITE" id="PS00464">
    <property type="entry name" value="RIBOSOMAL_L22"/>
    <property type="match status" value="1"/>
</dbReference>
<accession>B2T746</accession>
<organism>
    <name type="scientific">Paraburkholderia phytofirmans (strain DSM 17436 / LMG 22146 / PsJN)</name>
    <name type="common">Burkholderia phytofirmans</name>
    <dbReference type="NCBI Taxonomy" id="398527"/>
    <lineage>
        <taxon>Bacteria</taxon>
        <taxon>Pseudomonadati</taxon>
        <taxon>Pseudomonadota</taxon>
        <taxon>Betaproteobacteria</taxon>
        <taxon>Burkholderiales</taxon>
        <taxon>Burkholderiaceae</taxon>
        <taxon>Paraburkholderia</taxon>
    </lineage>
</organism>
<reference key="1">
    <citation type="journal article" date="2011" name="J. Bacteriol.">
        <title>Complete genome sequence of the plant growth-promoting endophyte Burkholderia phytofirmans strain PsJN.</title>
        <authorList>
            <person name="Weilharter A."/>
            <person name="Mitter B."/>
            <person name="Shin M.V."/>
            <person name="Chain P.S."/>
            <person name="Nowak J."/>
            <person name="Sessitsch A."/>
        </authorList>
    </citation>
    <scope>NUCLEOTIDE SEQUENCE [LARGE SCALE GENOMIC DNA]</scope>
    <source>
        <strain>DSM 17436 / LMG 22146 / PsJN</strain>
    </source>
</reference>
<comment type="function">
    <text evidence="1">This protein binds specifically to 23S rRNA; its binding is stimulated by other ribosomal proteins, e.g. L4, L17, and L20. It is important during the early stages of 50S assembly. It makes multiple contacts with different domains of the 23S rRNA in the assembled 50S subunit and ribosome (By similarity).</text>
</comment>
<comment type="function">
    <text evidence="1">The globular domain of the protein is located near the polypeptide exit tunnel on the outside of the subunit, while an extended beta-hairpin is found that lines the wall of the exit tunnel in the center of the 70S ribosome.</text>
</comment>
<comment type="subunit">
    <text evidence="1">Part of the 50S ribosomal subunit.</text>
</comment>
<comment type="similarity">
    <text evidence="1">Belongs to the universal ribosomal protein uL22 family.</text>
</comment>
<sequence length="110" mass="11934">MMEVKAIHRGARISAQKTRLVADQIRGLPVDKALNVLTFSPKKAAGIVKKVVLSAIANAEHNEGADIDELKITSIYIDKAASLKRFTARAKGRGNRIEKQSCHITVTVGN</sequence>
<gene>
    <name evidence="1" type="primary">rplV</name>
    <name type="ordered locus">Bphyt_3639</name>
</gene>
<feature type="chain" id="PRO_0000354451" description="Large ribosomal subunit protein uL22">
    <location>
        <begin position="1"/>
        <end position="110"/>
    </location>
</feature>
<name>RL22_PARPJ</name>
<proteinExistence type="inferred from homology"/>